<proteinExistence type="inferred from homology"/>
<dbReference type="EC" id="3.4.23.36" evidence="1"/>
<dbReference type="EMBL" id="CU633749">
    <property type="protein sequence ID" value="CAQ70453.1"/>
    <property type="molecule type" value="Genomic_DNA"/>
</dbReference>
<dbReference type="RefSeq" id="WP_012353751.1">
    <property type="nucleotide sequence ID" value="NC_010528.1"/>
</dbReference>
<dbReference type="SMR" id="B3R6E9"/>
<dbReference type="GeneID" id="29760764"/>
<dbReference type="KEGG" id="cti:RALTA_A2522"/>
<dbReference type="eggNOG" id="COG0597">
    <property type="taxonomic scope" value="Bacteria"/>
</dbReference>
<dbReference type="HOGENOM" id="CLU_083252_4_0_4"/>
<dbReference type="BioCyc" id="CTAI977880:RALTA_RS12260-MONOMER"/>
<dbReference type="UniPathway" id="UPA00665"/>
<dbReference type="Proteomes" id="UP000001692">
    <property type="component" value="Chromosome 1"/>
</dbReference>
<dbReference type="GO" id="GO:0005886">
    <property type="term" value="C:plasma membrane"/>
    <property type="evidence" value="ECO:0007669"/>
    <property type="project" value="UniProtKB-SubCell"/>
</dbReference>
<dbReference type="GO" id="GO:0004190">
    <property type="term" value="F:aspartic-type endopeptidase activity"/>
    <property type="evidence" value="ECO:0007669"/>
    <property type="project" value="UniProtKB-UniRule"/>
</dbReference>
<dbReference type="GO" id="GO:0006508">
    <property type="term" value="P:proteolysis"/>
    <property type="evidence" value="ECO:0007669"/>
    <property type="project" value="UniProtKB-KW"/>
</dbReference>
<dbReference type="HAMAP" id="MF_00161">
    <property type="entry name" value="LspA"/>
    <property type="match status" value="1"/>
</dbReference>
<dbReference type="InterPro" id="IPR001872">
    <property type="entry name" value="Peptidase_A8"/>
</dbReference>
<dbReference type="NCBIfam" id="TIGR00077">
    <property type="entry name" value="lspA"/>
    <property type="match status" value="1"/>
</dbReference>
<dbReference type="PANTHER" id="PTHR33695">
    <property type="entry name" value="LIPOPROTEIN SIGNAL PEPTIDASE"/>
    <property type="match status" value="1"/>
</dbReference>
<dbReference type="PANTHER" id="PTHR33695:SF1">
    <property type="entry name" value="LIPOPROTEIN SIGNAL PEPTIDASE"/>
    <property type="match status" value="1"/>
</dbReference>
<dbReference type="Pfam" id="PF01252">
    <property type="entry name" value="Peptidase_A8"/>
    <property type="match status" value="1"/>
</dbReference>
<dbReference type="PRINTS" id="PR00781">
    <property type="entry name" value="LIPOSIGPTASE"/>
</dbReference>
<dbReference type="PROSITE" id="PS00855">
    <property type="entry name" value="SPASE_II"/>
    <property type="match status" value="1"/>
</dbReference>
<gene>
    <name evidence="1" type="primary">lspA</name>
    <name type="ordered locus">RALTA_A2522</name>
</gene>
<reference key="1">
    <citation type="journal article" date="2008" name="Genome Res.">
        <title>Genome sequence of the beta-rhizobium Cupriavidus taiwanensis and comparative genomics of rhizobia.</title>
        <authorList>
            <person name="Amadou C."/>
            <person name="Pascal G."/>
            <person name="Mangenot S."/>
            <person name="Glew M."/>
            <person name="Bontemps C."/>
            <person name="Capela D."/>
            <person name="Carrere S."/>
            <person name="Cruveiller S."/>
            <person name="Dossat C."/>
            <person name="Lajus A."/>
            <person name="Marchetti M."/>
            <person name="Poinsot V."/>
            <person name="Rouy Z."/>
            <person name="Servin B."/>
            <person name="Saad M."/>
            <person name="Schenowitz C."/>
            <person name="Barbe V."/>
            <person name="Batut J."/>
            <person name="Medigue C."/>
            <person name="Masson-Boivin C."/>
        </authorList>
    </citation>
    <scope>NUCLEOTIDE SEQUENCE [LARGE SCALE GENOMIC DNA]</scope>
    <source>
        <strain>DSM 17343 / BCRC 17206 / CCUG 44338 / CIP 107171 / LMG 19424 / R1</strain>
    </source>
</reference>
<accession>B3R6E9</accession>
<feature type="chain" id="PRO_1000097251" description="Lipoprotein signal peptidase">
    <location>
        <begin position="1"/>
        <end position="176"/>
    </location>
</feature>
<feature type="transmembrane region" description="Helical" evidence="1">
    <location>
        <begin position="26"/>
        <end position="46"/>
    </location>
</feature>
<feature type="transmembrane region" description="Helical" evidence="1">
    <location>
        <begin position="57"/>
        <end position="77"/>
    </location>
</feature>
<feature type="transmembrane region" description="Helical" evidence="1">
    <location>
        <begin position="82"/>
        <end position="102"/>
    </location>
</feature>
<feature type="transmembrane region" description="Helical" evidence="1">
    <location>
        <begin position="111"/>
        <end position="131"/>
    </location>
</feature>
<feature type="transmembrane region" description="Helical" evidence="1">
    <location>
        <begin position="147"/>
        <end position="167"/>
    </location>
</feature>
<feature type="active site" evidence="1">
    <location>
        <position position="137"/>
    </location>
</feature>
<feature type="active site" evidence="1">
    <location>
        <position position="155"/>
    </location>
</feature>
<comment type="function">
    <text evidence="1">This protein specifically catalyzes the removal of signal peptides from prolipoproteins.</text>
</comment>
<comment type="catalytic activity">
    <reaction evidence="1">
        <text>Release of signal peptides from bacterial membrane prolipoproteins. Hydrolyzes -Xaa-Yaa-Zaa-|-(S,diacylglyceryl)Cys-, in which Xaa is hydrophobic (preferably Leu), and Yaa (Ala or Ser) and Zaa (Gly or Ala) have small, neutral side chains.</text>
        <dbReference type="EC" id="3.4.23.36"/>
    </reaction>
</comment>
<comment type="pathway">
    <text evidence="1">Protein modification; lipoprotein biosynthesis (signal peptide cleavage).</text>
</comment>
<comment type="subcellular location">
    <subcellularLocation>
        <location evidence="1">Cell inner membrane</location>
        <topology evidence="1">Multi-pass membrane protein</topology>
    </subcellularLocation>
</comment>
<comment type="similarity">
    <text evidence="1">Belongs to the peptidase A8 family.</text>
</comment>
<organism>
    <name type="scientific">Cupriavidus taiwanensis (strain DSM 17343 / BCRC 17206 / CCUG 44338 / CIP 107171 / LMG 19424 / R1)</name>
    <name type="common">Ralstonia taiwanensis (strain LMG 19424)</name>
    <dbReference type="NCBI Taxonomy" id="977880"/>
    <lineage>
        <taxon>Bacteria</taxon>
        <taxon>Pseudomonadati</taxon>
        <taxon>Pseudomonadota</taxon>
        <taxon>Betaproteobacteria</taxon>
        <taxon>Burkholderiales</taxon>
        <taxon>Burkholderiaceae</taxon>
        <taxon>Cupriavidus</taxon>
    </lineage>
</organism>
<sequence>MASTTSRSARPARRNNKAAGSTTPLLWLAFALLVVLLDQFFKIVIVRSFTYGESRPVTGFFNLVLVYNKGAAFSFLADAGGWQRWFFTGLGVVVGAFIVWLLYRHTGQRLFCFAVSLILGGAVGNVVDRVIYGHVIDFLDFYVGRYHWPAFNVADCAITVGAVLLIVDELRRVRKH</sequence>
<evidence type="ECO:0000255" key="1">
    <source>
        <dbReference type="HAMAP-Rule" id="MF_00161"/>
    </source>
</evidence>
<keyword id="KW-0064">Aspartyl protease</keyword>
<keyword id="KW-0997">Cell inner membrane</keyword>
<keyword id="KW-1003">Cell membrane</keyword>
<keyword id="KW-0378">Hydrolase</keyword>
<keyword id="KW-0472">Membrane</keyword>
<keyword id="KW-0645">Protease</keyword>
<keyword id="KW-0812">Transmembrane</keyword>
<keyword id="KW-1133">Transmembrane helix</keyword>
<name>LSPA_CUPTR</name>
<protein>
    <recommendedName>
        <fullName evidence="1">Lipoprotein signal peptidase</fullName>
        <ecNumber evidence="1">3.4.23.36</ecNumber>
    </recommendedName>
    <alternativeName>
        <fullName evidence="1">Prolipoprotein signal peptidase</fullName>
    </alternativeName>
    <alternativeName>
        <fullName evidence="1">Signal peptidase II</fullName>
        <shortName evidence="1">SPase II</shortName>
    </alternativeName>
</protein>